<protein>
    <recommendedName>
        <fullName>Sarcoplasmic/endoplasmic reticulum calcium ATPase 3</fullName>
        <shortName>SERCA3</shortName>
        <shortName>SR Ca(2+)-ATPase 3</shortName>
        <ecNumber>7.2.2.10</ecNumber>
    </recommendedName>
    <alternativeName>
        <fullName>Calcium pump 3</fullName>
    </alternativeName>
</protein>
<keyword id="KW-0007">Acetylation</keyword>
<keyword id="KW-0067">ATP-binding</keyword>
<keyword id="KW-0106">Calcium</keyword>
<keyword id="KW-0109">Calcium transport</keyword>
<keyword id="KW-1015">Disulfide bond</keyword>
<keyword id="KW-0256">Endoplasmic reticulum</keyword>
<keyword id="KW-0406">Ion transport</keyword>
<keyword id="KW-0460">Magnesium</keyword>
<keyword id="KW-0472">Membrane</keyword>
<keyword id="KW-0479">Metal-binding</keyword>
<keyword id="KW-0547">Nucleotide-binding</keyword>
<keyword id="KW-0597">Phosphoprotein</keyword>
<keyword id="KW-1185">Reference proteome</keyword>
<keyword id="KW-0703">Sarcoplasmic reticulum</keyword>
<keyword id="KW-1278">Translocase</keyword>
<keyword id="KW-0812">Transmembrane</keyword>
<keyword id="KW-1133">Transmembrane helix</keyword>
<keyword id="KW-0813">Transport</keyword>
<dbReference type="EC" id="7.2.2.10"/>
<dbReference type="EMBL" id="AF084929">
    <property type="protein sequence ID" value="AAC33481.1"/>
    <property type="molecule type" value="mRNA"/>
</dbReference>
<dbReference type="EMBL" id="GACC01000275">
    <property type="protein sequence ID" value="JAA53532.1"/>
    <property type="molecule type" value="mRNA"/>
</dbReference>
<dbReference type="EMBL" id="AEMK02000082">
    <property type="status" value="NOT_ANNOTATED_CDS"/>
    <property type="molecule type" value="Genomic_DNA"/>
</dbReference>
<dbReference type="EMBL" id="DQIR01197659">
    <property type="protein sequence ID" value="HDB53136.1"/>
    <property type="molecule type" value="Transcribed_RNA"/>
</dbReference>
<dbReference type="EMBL" id="DQIR01147094">
    <property type="protein sequence ID" value="HDB02571.1"/>
    <property type="molecule type" value="Transcribed_RNA"/>
</dbReference>
<dbReference type="EMBL" id="DQIR01162709">
    <property type="protein sequence ID" value="HDB18186.1"/>
    <property type="molecule type" value="Transcribed_RNA"/>
</dbReference>
<dbReference type="EMBL" id="DQIR01166546">
    <property type="protein sequence ID" value="HDB22023.1"/>
    <property type="molecule type" value="Transcribed_RNA"/>
</dbReference>
<dbReference type="RefSeq" id="XP_020923351.1">
    <property type="nucleotide sequence ID" value="XM_021067692.1"/>
</dbReference>
<dbReference type="SMR" id="O77696"/>
<dbReference type="FunCoup" id="O77696">
    <property type="interactions" value="384"/>
</dbReference>
<dbReference type="PaxDb" id="9823-ENSSSCP00000018933"/>
<dbReference type="Ensembl" id="ENSSSCT00000056237.3">
    <property type="protein sequence ID" value="ENSSSCP00000035943.1"/>
    <property type="gene ID" value="ENSSSCG00000017874.5"/>
</dbReference>
<dbReference type="Ensembl" id="ENSSSCT00055060309.1">
    <property type="protein sequence ID" value="ENSSSCP00055048321.1"/>
    <property type="gene ID" value="ENSSSCG00055029890.1"/>
</dbReference>
<dbReference type="GeneID" id="396820"/>
<dbReference type="VGNC" id="VGNC:85648">
    <property type="gene designation" value="ATP2A3"/>
</dbReference>
<dbReference type="eggNOG" id="KOG0202">
    <property type="taxonomic scope" value="Eukaryota"/>
</dbReference>
<dbReference type="GeneTree" id="ENSGT00940000155668"/>
<dbReference type="InParanoid" id="O77696"/>
<dbReference type="OrthoDB" id="3352408at2759"/>
<dbReference type="Reactome" id="R-SSC-418359">
    <property type="pathway name" value="Reduction of cytosolic Ca++ levels"/>
</dbReference>
<dbReference type="Reactome" id="R-SSC-5578775">
    <property type="pathway name" value="Ion homeostasis"/>
</dbReference>
<dbReference type="Reactome" id="R-SSC-936837">
    <property type="pathway name" value="Ion transport by P-type ATPases"/>
</dbReference>
<dbReference type="Proteomes" id="UP000008227">
    <property type="component" value="Chromosome 12"/>
</dbReference>
<dbReference type="Proteomes" id="UP000314985">
    <property type="component" value="Unplaced"/>
</dbReference>
<dbReference type="Proteomes" id="UP000694570">
    <property type="component" value="Unplaced"/>
</dbReference>
<dbReference type="Proteomes" id="UP000694571">
    <property type="component" value="Unplaced"/>
</dbReference>
<dbReference type="Proteomes" id="UP000694720">
    <property type="component" value="Unplaced"/>
</dbReference>
<dbReference type="Proteomes" id="UP000694722">
    <property type="component" value="Unplaced"/>
</dbReference>
<dbReference type="Proteomes" id="UP000694723">
    <property type="component" value="Unplaced"/>
</dbReference>
<dbReference type="Proteomes" id="UP000694724">
    <property type="component" value="Unplaced"/>
</dbReference>
<dbReference type="Proteomes" id="UP000694725">
    <property type="component" value="Unplaced"/>
</dbReference>
<dbReference type="Proteomes" id="UP000694726">
    <property type="component" value="Unplaced"/>
</dbReference>
<dbReference type="Proteomes" id="UP000694727">
    <property type="component" value="Unplaced"/>
</dbReference>
<dbReference type="Proteomes" id="UP000694728">
    <property type="component" value="Unplaced"/>
</dbReference>
<dbReference type="Bgee" id="ENSSSCG00000017874">
    <property type="expression patterns" value="Expressed in blood and 42 other cell types or tissues"/>
</dbReference>
<dbReference type="ExpressionAtlas" id="O77696">
    <property type="expression patterns" value="baseline and differential"/>
</dbReference>
<dbReference type="GO" id="GO:0016020">
    <property type="term" value="C:membrane"/>
    <property type="evidence" value="ECO:0000318"/>
    <property type="project" value="GO_Central"/>
</dbReference>
<dbReference type="GO" id="GO:0033017">
    <property type="term" value="C:sarcoplasmic reticulum membrane"/>
    <property type="evidence" value="ECO:0007669"/>
    <property type="project" value="UniProtKB-SubCell"/>
</dbReference>
<dbReference type="GO" id="GO:0005524">
    <property type="term" value="F:ATP binding"/>
    <property type="evidence" value="ECO:0007669"/>
    <property type="project" value="UniProtKB-KW"/>
</dbReference>
<dbReference type="GO" id="GO:0016887">
    <property type="term" value="F:ATP hydrolysis activity"/>
    <property type="evidence" value="ECO:0007669"/>
    <property type="project" value="InterPro"/>
</dbReference>
<dbReference type="GO" id="GO:0046872">
    <property type="term" value="F:metal ion binding"/>
    <property type="evidence" value="ECO:0007669"/>
    <property type="project" value="UniProtKB-KW"/>
</dbReference>
<dbReference type="GO" id="GO:0005388">
    <property type="term" value="F:P-type calcium transporter activity"/>
    <property type="evidence" value="ECO:0000318"/>
    <property type="project" value="GO_Central"/>
</dbReference>
<dbReference type="GO" id="GO:0070588">
    <property type="term" value="P:calcium ion transmembrane transport"/>
    <property type="evidence" value="ECO:0000318"/>
    <property type="project" value="GO_Central"/>
</dbReference>
<dbReference type="GO" id="GO:0006874">
    <property type="term" value="P:intracellular calcium ion homeostasis"/>
    <property type="evidence" value="ECO:0000318"/>
    <property type="project" value="GO_Central"/>
</dbReference>
<dbReference type="CDD" id="cd02083">
    <property type="entry name" value="P-type_ATPase_SERCA"/>
    <property type="match status" value="1"/>
</dbReference>
<dbReference type="FunFam" id="3.40.1110.10:FF:000003">
    <property type="entry name" value="Calcium-transporting ATPase"/>
    <property type="match status" value="1"/>
</dbReference>
<dbReference type="FunFam" id="3.40.50.1000:FF:000005">
    <property type="entry name" value="Calcium-transporting ATPase 1"/>
    <property type="match status" value="1"/>
</dbReference>
<dbReference type="FunFam" id="1.20.1110.10:FF:000065">
    <property type="entry name" value="Sarcoplasmic/endoplasmic reticulum calcium ATPase 1"/>
    <property type="match status" value="3"/>
</dbReference>
<dbReference type="FunFam" id="2.70.150.10:FF:000160">
    <property type="entry name" value="Sarcoplasmic/endoplasmic reticulum calcium ATPase 1"/>
    <property type="match status" value="1"/>
</dbReference>
<dbReference type="Gene3D" id="3.40.1110.10">
    <property type="entry name" value="Calcium-transporting ATPase, cytoplasmic domain N"/>
    <property type="match status" value="1"/>
</dbReference>
<dbReference type="Gene3D" id="2.70.150.10">
    <property type="entry name" value="Calcium-transporting ATPase, cytoplasmic transduction domain A"/>
    <property type="match status" value="1"/>
</dbReference>
<dbReference type="Gene3D" id="1.20.1110.10">
    <property type="entry name" value="Calcium-transporting ATPase, transmembrane domain"/>
    <property type="match status" value="1"/>
</dbReference>
<dbReference type="Gene3D" id="3.40.50.1000">
    <property type="entry name" value="HAD superfamily/HAD-like"/>
    <property type="match status" value="1"/>
</dbReference>
<dbReference type="InterPro" id="IPR006068">
    <property type="entry name" value="ATPase_P-typ_cation-transptr_C"/>
</dbReference>
<dbReference type="InterPro" id="IPR004014">
    <property type="entry name" value="ATPase_P-typ_cation-transptr_N"/>
</dbReference>
<dbReference type="InterPro" id="IPR023299">
    <property type="entry name" value="ATPase_P-typ_cyto_dom_N"/>
</dbReference>
<dbReference type="InterPro" id="IPR018303">
    <property type="entry name" value="ATPase_P-typ_P_site"/>
</dbReference>
<dbReference type="InterPro" id="IPR023298">
    <property type="entry name" value="ATPase_P-typ_TM_dom_sf"/>
</dbReference>
<dbReference type="InterPro" id="IPR008250">
    <property type="entry name" value="ATPase_P-typ_transduc_dom_A_sf"/>
</dbReference>
<dbReference type="InterPro" id="IPR036412">
    <property type="entry name" value="HAD-like_sf"/>
</dbReference>
<dbReference type="InterPro" id="IPR023214">
    <property type="entry name" value="HAD_sf"/>
</dbReference>
<dbReference type="InterPro" id="IPR005782">
    <property type="entry name" value="P-type_ATPase_IIA"/>
</dbReference>
<dbReference type="InterPro" id="IPR001757">
    <property type="entry name" value="P_typ_ATPase"/>
</dbReference>
<dbReference type="InterPro" id="IPR044492">
    <property type="entry name" value="P_typ_ATPase_HD_dom"/>
</dbReference>
<dbReference type="NCBIfam" id="TIGR01116">
    <property type="entry name" value="ATPase-IIA1_Ca"/>
    <property type="match status" value="1"/>
</dbReference>
<dbReference type="NCBIfam" id="TIGR01494">
    <property type="entry name" value="ATPase_P-type"/>
    <property type="match status" value="3"/>
</dbReference>
<dbReference type="PANTHER" id="PTHR42861">
    <property type="entry name" value="CALCIUM-TRANSPORTING ATPASE"/>
    <property type="match status" value="1"/>
</dbReference>
<dbReference type="Pfam" id="PF13246">
    <property type="entry name" value="Cation_ATPase"/>
    <property type="match status" value="1"/>
</dbReference>
<dbReference type="Pfam" id="PF00689">
    <property type="entry name" value="Cation_ATPase_C"/>
    <property type="match status" value="1"/>
</dbReference>
<dbReference type="Pfam" id="PF00690">
    <property type="entry name" value="Cation_ATPase_N"/>
    <property type="match status" value="1"/>
</dbReference>
<dbReference type="Pfam" id="PF00122">
    <property type="entry name" value="E1-E2_ATPase"/>
    <property type="match status" value="1"/>
</dbReference>
<dbReference type="Pfam" id="PF00702">
    <property type="entry name" value="Hydrolase"/>
    <property type="match status" value="1"/>
</dbReference>
<dbReference type="PRINTS" id="PR00119">
    <property type="entry name" value="CATATPASE"/>
</dbReference>
<dbReference type="SFLD" id="SFLDS00003">
    <property type="entry name" value="Haloacid_Dehalogenase"/>
    <property type="match status" value="1"/>
</dbReference>
<dbReference type="SFLD" id="SFLDF00027">
    <property type="entry name" value="p-type_atpase"/>
    <property type="match status" value="1"/>
</dbReference>
<dbReference type="SMART" id="SM00831">
    <property type="entry name" value="Cation_ATPase_N"/>
    <property type="match status" value="1"/>
</dbReference>
<dbReference type="SUPFAM" id="SSF81653">
    <property type="entry name" value="Calcium ATPase, transduction domain A"/>
    <property type="match status" value="1"/>
</dbReference>
<dbReference type="SUPFAM" id="SSF81665">
    <property type="entry name" value="Calcium ATPase, transmembrane domain M"/>
    <property type="match status" value="1"/>
</dbReference>
<dbReference type="SUPFAM" id="SSF56784">
    <property type="entry name" value="HAD-like"/>
    <property type="match status" value="1"/>
</dbReference>
<dbReference type="SUPFAM" id="SSF81660">
    <property type="entry name" value="Metal cation-transporting ATPase, ATP-binding domain N"/>
    <property type="match status" value="1"/>
</dbReference>
<dbReference type="PROSITE" id="PS00154">
    <property type="entry name" value="ATPASE_E1_E2"/>
    <property type="match status" value="1"/>
</dbReference>
<proteinExistence type="evidence at transcript level"/>
<accession>O77696</accession>
<accession>A0A286ZW82</accession>
<accession>K9IW69</accession>
<comment type="function">
    <text evidence="5">This magnesium-dependent enzyme catalyzes the hydrolysis of ATP coupled with the transport of calcium. Transports calcium ions from the cytosol into the sarcoplasmic/endoplasmic reticulum lumen. Contributes to calcium sequestration involved in muscular excitation/contraction.</text>
</comment>
<comment type="catalytic activity">
    <reaction evidence="5">
        <text>Ca(2+)(in) + ATP + H2O = Ca(2+)(out) + ADP + phosphate + H(+)</text>
        <dbReference type="Rhea" id="RHEA:18105"/>
        <dbReference type="ChEBI" id="CHEBI:15377"/>
        <dbReference type="ChEBI" id="CHEBI:15378"/>
        <dbReference type="ChEBI" id="CHEBI:29108"/>
        <dbReference type="ChEBI" id="CHEBI:30616"/>
        <dbReference type="ChEBI" id="CHEBI:43474"/>
        <dbReference type="ChEBI" id="CHEBI:456216"/>
        <dbReference type="EC" id="7.2.2.10"/>
    </reaction>
    <physiologicalReaction direction="left-to-right" evidence="5">
        <dbReference type="Rhea" id="RHEA:18106"/>
    </physiologicalReaction>
</comment>
<comment type="cofactor">
    <cofactor evidence="1">
        <name>Mg(2+)</name>
        <dbReference type="ChEBI" id="CHEBI:18420"/>
    </cofactor>
</comment>
<comment type="activity regulation">
    <text evidence="1 4">Inhibited by sarcolipin (SLN), phospholamban (PLN) and myoregulin (MRLN) (By similarity). Enhanced by DWORF; DWORF increases activity by displacing sarcolipin (SLN), phospholamban (PLN) and myoregulin (MRLN) (By similarity).</text>
</comment>
<comment type="subunit">
    <text evidence="1 4 5">Interacts with sarcolipin (SLN) (By similarity). Interacts with phospholamban (PLN) (By similarity). Interacts with myoregulin (MRLN). Interacts with DWORF (By similarity). Interacts with VMP1 (By similarity). Interacts with TUNAR; the interaction occurs at low levels in low glucose conditions and is increased by high glucose levels (By similarity).</text>
</comment>
<comment type="subcellular location">
    <subcellularLocation>
        <location evidence="5">Endoplasmic reticulum membrane</location>
        <topology evidence="5">Multi-pass membrane protein</topology>
    </subcellularLocation>
    <subcellularLocation>
        <location evidence="5">Sarcoplasmic reticulum membrane</location>
        <topology evidence="5">Multi-pass membrane protein</topology>
    </subcellularLocation>
</comment>
<comment type="tissue specificity">
    <text evidence="6">Expressed in endothelial tissues.</text>
</comment>
<comment type="similarity">
    <text evidence="7">Belongs to the cation transport ATPase (P-type) (TC 3.A.3) family. Type IIA subfamily.</text>
</comment>
<name>AT2A3_PIG</name>
<gene>
    <name type="primary">ATP2A3</name>
</gene>
<reference key="1">
    <citation type="journal article" date="2000" name="Mol. Cell. Biochem.">
        <title>SERCA pump isoform expression in endothelium of veins and arteries: every endothelium is not the same.</title>
        <authorList>
            <person name="Khan I."/>
            <person name="Sandhu V."/>
            <person name="Misquitta C.M."/>
            <person name="Grover A.K."/>
        </authorList>
    </citation>
    <scope>NUCLEOTIDE SEQUENCE [MRNA] OF 773-907</scope>
    <scope>TISSUE SPECIFICITY</scope>
    <source>
        <tissue>Coronary artery</tissue>
    </source>
</reference>
<reference evidence="9" key="2">
    <citation type="submission" date="2013-02" db="EMBL/GenBank/DDBJ databases">
        <title>Global Gene Expression Profiling of Alveolar Macrophages by Deep Sequencing.</title>
        <authorList>
            <person name="Dawson H.D."/>
            <person name="Chen C.T."/>
        </authorList>
    </citation>
    <scope>NUCLEOTIDE SEQUENCE [LARGE SCALE MRNA]</scope>
</reference>
<reference evidence="10" key="3">
    <citation type="submission" date="2009-11" db="EMBL/GenBank/DDBJ databases">
        <authorList>
            <consortium name="Porcine genome sequencing project"/>
        </authorList>
    </citation>
    <scope>NUCLEOTIDE SEQUENCE [LARGE SCALE GENOMIC DNA]</scope>
    <source>
        <strain evidence="10">Duroc</strain>
    </source>
</reference>
<reference evidence="8" key="4">
    <citation type="journal article" date="2019" name="PeerJ">
        <title>Genes of the pig, Sus scrofa, reconstructed with EvidentialGene.</title>
        <authorList>
            <person name="Gilbert D.G."/>
        </authorList>
    </citation>
    <scope>IDENTIFICATION</scope>
</reference>
<sequence length="999" mass="109328">MEEAHLLPAADVLRRFSVTAEGGLSPAQVTRARERYGPNELPTEEGKSLWELVLEQFEDLLVRILLLAALVSFVLACFEEGEETTTAFVEPLVIVLILVANAVVGVWQERNAENAIEALKEYEPEMGKVIRSDRKGVQRIRARDIVPGDIVEVAVGDKVPADLRLIEIKSTTLRVDQSILTGESVSVTKHTDAIPDPRAVNQDKKNMLFSGTNIASGKAVGVAVATGLHTELGKIRNQMASVEPERTPLQQKLDEFGRQLSRAISVICMAVWVINIGHFADPAHGGSWLRGAVYYFKIAVALAVAAIPEGLPAVITTCLALGTRRMARKNAIVRSLPSVETLGCTSVICSDKTGTLTTNQMSVCRMFVVAEAEAGTCRLHEFTISGTTYAPEGEVRQGEQPVRCGKFDGLVELATICALCNDSALDYNEAKGVYEKVGEATETALTCLVEKMNVFDTDLQALSRVERAGACNAVIKQLMRKEFTLEFSRDRKSMSVYCTPTRPGLVAQGSKMFVKGAPESVIERCSSVRVGSRTVPLNTTSREQILAKVRDWGSGSDTLRCLALATRDAPPRKEAMQLDDCSKFVQYETDLTFVGCVGMLDPPRPEVASCIARCRQAGIRVVMITGDNKGTAVAICRRLGILEDTEDVVGKAYTGREFDDLSPEQQRHACRTARCFARVEPAHKSRIVENLQSFNEVTAMTGDGVNDAPALKKAEIGIAMGSGTAVAKSAAEMVLSDDNFASIVAAVEEGRAIYSNMKQFIRYLISSNVGEVVCIFLTAILGLPEALIPVQLLWVNLVTDGLPATALGFNPPDLDIMEKRPRNPREALISGWLFFRYLAIGVYVGLATVAAATWWFLYDAEGPQVTFYQLRNFLKCSEDNPLFTGTDCEVFESRFPTTMALSVLVTTEMCNALNSVSENQSLLRMPPWLNPWLLAAVAMSMALHFLILLVPPLPLIFQVTPLSGRQWVVVLQISLPVILLDEALKYLSRKHVDEEKGRQ</sequence>
<evidence type="ECO:0000250" key="1">
    <source>
        <dbReference type="UniProtKB" id="P04191"/>
    </source>
</evidence>
<evidence type="ECO:0000250" key="2">
    <source>
        <dbReference type="UniProtKB" id="P11607"/>
    </source>
</evidence>
<evidence type="ECO:0000250" key="3">
    <source>
        <dbReference type="UniProtKB" id="Q64518"/>
    </source>
</evidence>
<evidence type="ECO:0000250" key="4">
    <source>
        <dbReference type="UniProtKB" id="Q8R429"/>
    </source>
</evidence>
<evidence type="ECO:0000250" key="5">
    <source>
        <dbReference type="UniProtKB" id="Q93084"/>
    </source>
</evidence>
<evidence type="ECO:0000269" key="6">
    <source>
    </source>
</evidence>
<evidence type="ECO:0000305" key="7"/>
<evidence type="ECO:0000312" key="8">
    <source>
        <dbReference type="EMBL" id="HDB02571.1"/>
    </source>
</evidence>
<evidence type="ECO:0000312" key="9">
    <source>
        <dbReference type="EMBL" id="JAA53532.1"/>
    </source>
</evidence>
<evidence type="ECO:0000312" key="10">
    <source>
        <dbReference type="Proteomes" id="UP000008227"/>
    </source>
</evidence>
<feature type="chain" id="PRO_0000046204" description="Sarcoplasmic/endoplasmic reticulum calcium ATPase 3">
    <location>
        <begin position="1"/>
        <end position="999"/>
    </location>
</feature>
<feature type="topological domain" description="Cytoplasmic" evidence="1">
    <location>
        <begin position="1"/>
        <end position="48"/>
    </location>
</feature>
<feature type="transmembrane region" description="Helical; Name=1" evidence="1">
    <location>
        <begin position="49"/>
        <end position="69"/>
    </location>
</feature>
<feature type="topological domain" description="Extracellular" evidence="7">
    <location>
        <begin position="70"/>
        <end position="89"/>
    </location>
</feature>
<feature type="transmembrane region" description="Helical; Name=2" evidence="1">
    <location>
        <begin position="90"/>
        <end position="110"/>
    </location>
</feature>
<feature type="topological domain" description="Cytoplasmic" evidence="1">
    <location>
        <begin position="111"/>
        <end position="253"/>
    </location>
</feature>
<feature type="transmembrane region" description="Helical; Name=3" evidence="1">
    <location>
        <begin position="254"/>
        <end position="273"/>
    </location>
</feature>
<feature type="topological domain" description="Extracellular" evidence="1">
    <location>
        <begin position="274"/>
        <end position="295"/>
    </location>
</feature>
<feature type="transmembrane region" description="Helical; Name=4" evidence="1">
    <location>
        <begin position="296"/>
        <end position="313"/>
    </location>
</feature>
<feature type="topological domain" description="Cytoplasmic" evidence="1">
    <location>
        <begin position="314"/>
        <end position="757"/>
    </location>
</feature>
<feature type="transmembrane region" description="Helical; Name=5" evidence="1">
    <location>
        <begin position="758"/>
        <end position="777"/>
    </location>
</feature>
<feature type="topological domain" description="Extracellular" evidence="1">
    <location>
        <begin position="778"/>
        <end position="787"/>
    </location>
</feature>
<feature type="transmembrane region" description="Helical; Name=6" evidence="1">
    <location>
        <begin position="788"/>
        <end position="808"/>
    </location>
</feature>
<feature type="topological domain" description="Cytoplasmic" evidence="1">
    <location>
        <begin position="809"/>
        <end position="828"/>
    </location>
</feature>
<feature type="transmembrane region" description="Helical; Name=7" evidence="1">
    <location>
        <begin position="829"/>
        <end position="851"/>
    </location>
</feature>
<feature type="topological domain" description="Extracellular" evidence="1">
    <location>
        <begin position="852"/>
        <end position="897"/>
    </location>
</feature>
<feature type="transmembrane region" description="Helical; Name=8" evidence="1">
    <location>
        <begin position="898"/>
        <end position="917"/>
    </location>
</feature>
<feature type="topological domain" description="Cytoplasmic" evidence="1">
    <location>
        <begin position="918"/>
        <end position="930"/>
    </location>
</feature>
<feature type="transmembrane region" description="Helical; Name=9" evidence="1">
    <location>
        <begin position="931"/>
        <end position="949"/>
    </location>
</feature>
<feature type="topological domain" description="Extracellular" evidence="1">
    <location>
        <begin position="950"/>
        <end position="964"/>
    </location>
</feature>
<feature type="transmembrane region" description="Helical; Name=10" evidence="1">
    <location>
        <begin position="965"/>
        <end position="985"/>
    </location>
</feature>
<feature type="topological domain" description="Cytoplasmic" evidence="1">
    <location>
        <begin position="986"/>
        <end position="999"/>
    </location>
</feature>
<feature type="region of interest" description="Interaction with phospholamban 1" evidence="1">
    <location>
        <begin position="370"/>
        <end position="400"/>
    </location>
</feature>
<feature type="region of interest" description="Interaction with phospholamban 2" evidence="1">
    <location>
        <begin position="788"/>
        <end position="808"/>
    </location>
</feature>
<feature type="active site" description="4-aspartylphosphate intermediate" evidence="1">
    <location>
        <position position="351"/>
    </location>
</feature>
<feature type="binding site" evidence="2">
    <location>
        <position position="304"/>
    </location>
    <ligand>
        <name>Ca(2+)</name>
        <dbReference type="ChEBI" id="CHEBI:29108"/>
        <label>1</label>
    </ligand>
</feature>
<feature type="binding site" evidence="2">
    <location>
        <position position="305"/>
    </location>
    <ligand>
        <name>Ca(2+)</name>
        <dbReference type="ChEBI" id="CHEBI:29108"/>
        <label>1</label>
    </ligand>
</feature>
<feature type="binding site" evidence="2">
    <location>
        <position position="307"/>
    </location>
    <ligand>
        <name>Ca(2+)</name>
        <dbReference type="ChEBI" id="CHEBI:29108"/>
        <label>1</label>
    </ligand>
</feature>
<feature type="binding site" evidence="2">
    <location>
        <position position="309"/>
    </location>
    <ligand>
        <name>Ca(2+)</name>
        <dbReference type="ChEBI" id="CHEBI:29108"/>
        <label>1</label>
    </ligand>
</feature>
<feature type="binding site" evidence="2">
    <location>
        <position position="351"/>
    </location>
    <ligand>
        <name>Mg(2+)</name>
        <dbReference type="ChEBI" id="CHEBI:18420"/>
    </ligand>
</feature>
<feature type="binding site" evidence="1">
    <location>
        <position position="353"/>
    </location>
    <ligand>
        <name>ATP</name>
        <dbReference type="ChEBI" id="CHEBI:30616"/>
    </ligand>
</feature>
<feature type="binding site" evidence="2">
    <location>
        <position position="353"/>
    </location>
    <ligand>
        <name>Mg(2+)</name>
        <dbReference type="ChEBI" id="CHEBI:18420"/>
    </ligand>
</feature>
<feature type="binding site" evidence="1">
    <location>
        <position position="442"/>
    </location>
    <ligand>
        <name>ATP</name>
        <dbReference type="ChEBI" id="CHEBI:30616"/>
    </ligand>
</feature>
<feature type="binding site" evidence="1">
    <location>
        <position position="489"/>
    </location>
    <ligand>
        <name>ATP</name>
        <dbReference type="ChEBI" id="CHEBI:30616"/>
    </ligand>
</feature>
<feature type="binding site" evidence="2">
    <location>
        <position position="515"/>
    </location>
    <ligand>
        <name>ATP</name>
        <dbReference type="ChEBI" id="CHEBI:30616"/>
    </ligand>
</feature>
<feature type="binding site" evidence="1">
    <location>
        <position position="560"/>
    </location>
    <ligand>
        <name>ATP</name>
        <dbReference type="ChEBI" id="CHEBI:30616"/>
    </ligand>
</feature>
<feature type="binding site" evidence="1">
    <location>
        <position position="625"/>
    </location>
    <ligand>
        <name>ATP</name>
        <dbReference type="ChEBI" id="CHEBI:30616"/>
    </ligand>
</feature>
<feature type="binding site" evidence="1">
    <location>
        <position position="626"/>
    </location>
    <ligand>
        <name>ATP</name>
        <dbReference type="ChEBI" id="CHEBI:30616"/>
    </ligand>
</feature>
<feature type="binding site" evidence="1">
    <location>
        <position position="627"/>
    </location>
    <ligand>
        <name>ATP</name>
        <dbReference type="ChEBI" id="CHEBI:30616"/>
    </ligand>
</feature>
<feature type="binding site" evidence="1">
    <location>
        <position position="678"/>
    </location>
    <ligand>
        <name>ATP</name>
        <dbReference type="ChEBI" id="CHEBI:30616"/>
    </ligand>
</feature>
<feature type="binding site" evidence="1">
    <location>
        <position position="684"/>
    </location>
    <ligand>
        <name>ATP</name>
        <dbReference type="ChEBI" id="CHEBI:30616"/>
    </ligand>
</feature>
<feature type="binding site" evidence="2">
    <location>
        <position position="703"/>
    </location>
    <ligand>
        <name>Mg(2+)</name>
        <dbReference type="ChEBI" id="CHEBI:18420"/>
    </ligand>
</feature>
<feature type="binding site" evidence="1">
    <location>
        <position position="706"/>
    </location>
    <ligand>
        <name>ATP</name>
        <dbReference type="ChEBI" id="CHEBI:30616"/>
    </ligand>
</feature>
<feature type="binding site" evidence="2">
    <location>
        <position position="768"/>
    </location>
    <ligand>
        <name>Ca(2+)</name>
        <dbReference type="ChEBI" id="CHEBI:29108"/>
        <label>2</label>
    </ligand>
</feature>
<feature type="binding site" evidence="2">
    <location>
        <position position="771"/>
    </location>
    <ligand>
        <name>Ca(2+)</name>
        <dbReference type="ChEBI" id="CHEBI:29108"/>
        <label>2</label>
    </ligand>
</feature>
<feature type="binding site" evidence="2">
    <location>
        <position position="796"/>
    </location>
    <ligand>
        <name>Ca(2+)</name>
        <dbReference type="ChEBI" id="CHEBI:29108"/>
        <label>1</label>
    </ligand>
</feature>
<feature type="binding site" evidence="2">
    <location>
        <position position="799"/>
    </location>
    <ligand>
        <name>Ca(2+)</name>
        <dbReference type="ChEBI" id="CHEBI:29108"/>
        <label>2</label>
    </ligand>
</feature>
<feature type="binding site" evidence="2">
    <location>
        <position position="800"/>
    </location>
    <ligand>
        <name>Ca(2+)</name>
        <dbReference type="ChEBI" id="CHEBI:29108"/>
        <label>1</label>
    </ligand>
</feature>
<feature type="binding site" evidence="2">
    <location>
        <position position="800"/>
    </location>
    <ligand>
        <name>Ca(2+)</name>
        <dbReference type="ChEBI" id="CHEBI:29108"/>
        <label>2</label>
    </ligand>
</feature>
<feature type="binding site" evidence="2">
    <location>
        <position position="908"/>
    </location>
    <ligand>
        <name>Ca(2+)</name>
        <dbReference type="ChEBI" id="CHEBI:29108"/>
        <label>2</label>
    </ligand>
</feature>
<feature type="modified residue" description="N-acetylmethionine" evidence="5">
    <location>
        <position position="1"/>
    </location>
</feature>
<feature type="modified residue" description="Phosphoserine" evidence="3">
    <location>
        <position position="17"/>
    </location>
</feature>
<feature type="modified residue" description="Phosphothreonine" evidence="3">
    <location>
        <position position="19"/>
    </location>
</feature>
<feature type="modified residue" description="Phosphoserine" evidence="3">
    <location>
        <position position="25"/>
    </location>
</feature>
<feature type="modified residue" description="Phosphothreonine" evidence="3">
    <location>
        <position position="415"/>
    </location>
</feature>
<feature type="modified residue" description="Phosphoserine" evidence="5">
    <location>
        <position position="662"/>
    </location>
</feature>
<feature type="disulfide bond" evidence="2">
    <location>
        <begin position="876"/>
        <end position="888"/>
    </location>
</feature>
<feature type="sequence conflict" description="In Ref. 2; JAA53532." evidence="7" ref="2">
    <original>K</original>
    <variation>E</variation>
    <location>
        <position position="205"/>
    </location>
</feature>
<feature type="sequence conflict" description="In Ref. 2; JAA53532." evidence="7" ref="2">
    <original>G</original>
    <variation>S</variation>
    <location>
        <position position="375"/>
    </location>
</feature>
<feature type="sequence conflict" description="In Ref. 2; JAA53532." evidence="7" ref="2">
    <original>D</original>
    <variation>N</variation>
    <location>
        <position position="458"/>
    </location>
</feature>
<feature type="sequence conflict" description="In Ref. 2; JAA53532." evidence="7" ref="2">
    <original>V</original>
    <variation>A</variation>
    <location>
        <position position="585"/>
    </location>
</feature>
<feature type="sequence conflict" description="In Ref. 1; AAC33481." evidence="7" ref="1">
    <original>R</original>
    <variation>L</variation>
    <location>
        <position position="820"/>
    </location>
</feature>
<feature type="sequence conflict" description="In Ref. 1; AAC33481." evidence="7" ref="1">
    <original>Y</original>
    <variation>H</variation>
    <location>
        <position position="868"/>
    </location>
</feature>
<feature type="sequence conflict" description="In Ref. 1; AAC33481." evidence="7" ref="1">
    <original>TGT</original>
    <variation>AGI</variation>
    <location>
        <begin position="884"/>
        <end position="886"/>
    </location>
</feature>
<feature type="sequence conflict" description="In Ref. 1; AAC33481." evidence="7" ref="1">
    <original>T</original>
    <variation>I</variation>
    <location>
        <position position="907"/>
    </location>
</feature>
<organism>
    <name type="scientific">Sus scrofa</name>
    <name type="common">Pig</name>
    <dbReference type="NCBI Taxonomy" id="9823"/>
    <lineage>
        <taxon>Eukaryota</taxon>
        <taxon>Metazoa</taxon>
        <taxon>Chordata</taxon>
        <taxon>Craniata</taxon>
        <taxon>Vertebrata</taxon>
        <taxon>Euteleostomi</taxon>
        <taxon>Mammalia</taxon>
        <taxon>Eutheria</taxon>
        <taxon>Laurasiatheria</taxon>
        <taxon>Artiodactyla</taxon>
        <taxon>Suina</taxon>
        <taxon>Suidae</taxon>
        <taxon>Sus</taxon>
    </lineage>
</organism>